<proteinExistence type="inferred from homology"/>
<reference key="1">
    <citation type="submission" date="2006-10" db="EMBL/GenBank/DDBJ databases">
        <title>Complete sequence of Syntrophobacter fumaroxidans MPOB.</title>
        <authorList>
            <consortium name="US DOE Joint Genome Institute"/>
            <person name="Copeland A."/>
            <person name="Lucas S."/>
            <person name="Lapidus A."/>
            <person name="Barry K."/>
            <person name="Detter J.C."/>
            <person name="Glavina del Rio T."/>
            <person name="Hammon N."/>
            <person name="Israni S."/>
            <person name="Pitluck S."/>
            <person name="Goltsman E.G."/>
            <person name="Martinez M."/>
            <person name="Schmutz J."/>
            <person name="Larimer F."/>
            <person name="Land M."/>
            <person name="Hauser L."/>
            <person name="Kyrpides N."/>
            <person name="Kim E."/>
            <person name="Boone D.R."/>
            <person name="Brockman F."/>
            <person name="Culley D."/>
            <person name="Ferry J."/>
            <person name="Gunsalus R."/>
            <person name="McInerney M.J."/>
            <person name="Morrison M."/>
            <person name="Plugge C."/>
            <person name="Rohlin L."/>
            <person name="Scholten J."/>
            <person name="Sieber J."/>
            <person name="Stams A.J.M."/>
            <person name="Worm P."/>
            <person name="Henstra A.M."/>
            <person name="Richardson P."/>
        </authorList>
    </citation>
    <scope>NUCLEOTIDE SEQUENCE [LARGE SCALE GENOMIC DNA]</scope>
    <source>
        <strain>DSM 10017 / MPOB</strain>
    </source>
</reference>
<evidence type="ECO:0000255" key="1">
    <source>
        <dbReference type="HAMAP-Rule" id="MF_00691"/>
    </source>
</evidence>
<protein>
    <recommendedName>
        <fullName evidence="1">5-oxoprolinase subunit A</fullName>
        <shortName evidence="1">5-OPase subunit A</shortName>
        <ecNumber evidence="1">3.5.2.9</ecNumber>
    </recommendedName>
    <alternativeName>
        <fullName evidence="1">5-oxoprolinase (ATP-hydrolyzing) subunit A</fullName>
    </alternativeName>
</protein>
<gene>
    <name evidence="1" type="primary">pxpA</name>
    <name type="ordered locus">Sfum_3392</name>
</gene>
<accession>A0LNR3</accession>
<dbReference type="EC" id="3.5.2.9" evidence="1"/>
<dbReference type="EMBL" id="CP000478">
    <property type="protein sequence ID" value="ABK19065.1"/>
    <property type="molecule type" value="Genomic_DNA"/>
</dbReference>
<dbReference type="RefSeq" id="WP_011700190.1">
    <property type="nucleotide sequence ID" value="NC_008554.1"/>
</dbReference>
<dbReference type="SMR" id="A0LNR3"/>
<dbReference type="FunCoup" id="A0LNR3">
    <property type="interactions" value="33"/>
</dbReference>
<dbReference type="STRING" id="335543.Sfum_3392"/>
<dbReference type="KEGG" id="sfu:Sfum_3392"/>
<dbReference type="eggNOG" id="COG1540">
    <property type="taxonomic scope" value="Bacteria"/>
</dbReference>
<dbReference type="HOGENOM" id="CLU_069535_0_0_7"/>
<dbReference type="InParanoid" id="A0LNR3"/>
<dbReference type="OrthoDB" id="9773478at2"/>
<dbReference type="Proteomes" id="UP000001784">
    <property type="component" value="Chromosome"/>
</dbReference>
<dbReference type="GO" id="GO:0017168">
    <property type="term" value="F:5-oxoprolinase (ATP-hydrolyzing) activity"/>
    <property type="evidence" value="ECO:0007669"/>
    <property type="project" value="UniProtKB-UniRule"/>
</dbReference>
<dbReference type="GO" id="GO:0005524">
    <property type="term" value="F:ATP binding"/>
    <property type="evidence" value="ECO:0007669"/>
    <property type="project" value="UniProtKB-UniRule"/>
</dbReference>
<dbReference type="GO" id="GO:0005975">
    <property type="term" value="P:carbohydrate metabolic process"/>
    <property type="evidence" value="ECO:0007669"/>
    <property type="project" value="InterPro"/>
</dbReference>
<dbReference type="CDD" id="cd10787">
    <property type="entry name" value="LamB_YcsF_like"/>
    <property type="match status" value="1"/>
</dbReference>
<dbReference type="Gene3D" id="3.20.20.370">
    <property type="entry name" value="Glycoside hydrolase/deacetylase"/>
    <property type="match status" value="1"/>
</dbReference>
<dbReference type="HAMAP" id="MF_00691">
    <property type="entry name" value="PxpA"/>
    <property type="match status" value="1"/>
</dbReference>
<dbReference type="InterPro" id="IPR011330">
    <property type="entry name" value="Glyco_hydro/deAcase_b/a-brl"/>
</dbReference>
<dbReference type="InterPro" id="IPR005501">
    <property type="entry name" value="LamB/YcsF/PxpA-like"/>
</dbReference>
<dbReference type="NCBIfam" id="NF003814">
    <property type="entry name" value="PRK05406.1-3"/>
    <property type="match status" value="1"/>
</dbReference>
<dbReference type="NCBIfam" id="NF003816">
    <property type="entry name" value="PRK05406.1-5"/>
    <property type="match status" value="1"/>
</dbReference>
<dbReference type="PANTHER" id="PTHR30292:SF0">
    <property type="entry name" value="5-OXOPROLINASE SUBUNIT A"/>
    <property type="match status" value="1"/>
</dbReference>
<dbReference type="PANTHER" id="PTHR30292">
    <property type="entry name" value="UNCHARACTERIZED PROTEIN YBGL-RELATED"/>
    <property type="match status" value="1"/>
</dbReference>
<dbReference type="Pfam" id="PF03746">
    <property type="entry name" value="LamB_YcsF"/>
    <property type="match status" value="1"/>
</dbReference>
<dbReference type="SUPFAM" id="SSF88713">
    <property type="entry name" value="Glycoside hydrolase/deacetylase"/>
    <property type="match status" value="1"/>
</dbReference>
<organism>
    <name type="scientific">Syntrophobacter fumaroxidans (strain DSM 10017 / MPOB)</name>
    <dbReference type="NCBI Taxonomy" id="335543"/>
    <lineage>
        <taxon>Bacteria</taxon>
        <taxon>Pseudomonadati</taxon>
        <taxon>Thermodesulfobacteriota</taxon>
        <taxon>Syntrophobacteria</taxon>
        <taxon>Syntrophobacterales</taxon>
        <taxon>Syntrophobacteraceae</taxon>
        <taxon>Syntrophobacter</taxon>
    </lineage>
</organism>
<name>PXPA_SYNFM</name>
<sequence>MRTDINCDMGESFGSYRIGEDEKVMPCITSANVACGWHAGDPMIMARTLELAARHGVAVGAHPGYPDLLGYGRRNLETFPGEVRNYILYQIGALAAFAGAAGVKLQHVKPHGAMYNLAARDERTAKEVIEAVKAYDPGLILVTLAGSLCAQMAADAGLRVAAEVFPDRAYLTTGQLAPRSMPGAVIHDPEQVKERVLKLVRTGMMTSIDGRDLALRADTLCVHGDNPGACLLAASIREALETSGVRVVAMGAQ</sequence>
<comment type="function">
    <text evidence="1">Catalyzes the cleavage of 5-oxoproline to form L-glutamate coupled to the hydrolysis of ATP to ADP and inorganic phosphate.</text>
</comment>
<comment type="catalytic activity">
    <reaction evidence="1">
        <text>5-oxo-L-proline + ATP + 2 H2O = L-glutamate + ADP + phosphate + H(+)</text>
        <dbReference type="Rhea" id="RHEA:10348"/>
        <dbReference type="ChEBI" id="CHEBI:15377"/>
        <dbReference type="ChEBI" id="CHEBI:15378"/>
        <dbReference type="ChEBI" id="CHEBI:29985"/>
        <dbReference type="ChEBI" id="CHEBI:30616"/>
        <dbReference type="ChEBI" id="CHEBI:43474"/>
        <dbReference type="ChEBI" id="CHEBI:58402"/>
        <dbReference type="ChEBI" id="CHEBI:456216"/>
        <dbReference type="EC" id="3.5.2.9"/>
    </reaction>
</comment>
<comment type="subunit">
    <text evidence="1">Forms a complex composed of PxpA, PxpB and PxpC.</text>
</comment>
<comment type="similarity">
    <text evidence="1">Belongs to the LamB/PxpA family.</text>
</comment>
<keyword id="KW-0067">ATP-binding</keyword>
<keyword id="KW-0378">Hydrolase</keyword>
<keyword id="KW-0547">Nucleotide-binding</keyword>
<keyword id="KW-1185">Reference proteome</keyword>
<feature type="chain" id="PRO_1000062025" description="5-oxoprolinase subunit A">
    <location>
        <begin position="1"/>
        <end position="253"/>
    </location>
</feature>